<reference key="1">
    <citation type="journal article" date="1991" name="J. Mol. Evol.">
        <title>Molecular phylogenetic analysis of actin genic regions from Achlya bisexualis (Oomycota) and Costaria costata (Chromophyta).</title>
        <authorList>
            <person name="Bhattacharya D."/>
            <person name="Stickel S.K."/>
            <person name="Sogin M.L."/>
        </authorList>
    </citation>
    <scope>NUCLEOTIDE SEQUENCE [GENOMIC DNA]</scope>
</reference>
<comment type="function">
    <text>Actins are highly conserved proteins that are involved in various types of cell motility and are ubiquitously expressed in all eukaryotic cells.</text>
</comment>
<comment type="function">
    <text>Essential component of cell cytoskeleton; plays an important role in cytoplasmic streaming, cell shape determination, cell division, organelle movement and extension growth.</text>
</comment>
<comment type="catalytic activity">
    <reaction evidence="1">
        <text>ATP + H2O = ADP + phosphate + H(+)</text>
        <dbReference type="Rhea" id="RHEA:13065"/>
        <dbReference type="ChEBI" id="CHEBI:15377"/>
        <dbReference type="ChEBI" id="CHEBI:15378"/>
        <dbReference type="ChEBI" id="CHEBI:30616"/>
        <dbReference type="ChEBI" id="CHEBI:43474"/>
        <dbReference type="ChEBI" id="CHEBI:456216"/>
    </reaction>
</comment>
<comment type="subcellular location">
    <subcellularLocation>
        <location>Cytoplasm</location>
        <location>Cytoskeleton</location>
    </subcellularLocation>
</comment>
<comment type="similarity">
    <text evidence="2">Belongs to the actin family.</text>
</comment>
<protein>
    <recommendedName>
        <fullName>Actin</fullName>
        <ecNumber evidence="1">3.6.4.-</ecNumber>
    </recommendedName>
</protein>
<feature type="chain" id="PRO_0000088914" description="Actin">
    <location>
        <begin position="1" status="less than"/>
        <end position="331"/>
    </location>
</feature>
<feature type="non-terminal residue">
    <location>
        <position position="1"/>
    </location>
</feature>
<proteinExistence type="inferred from homology"/>
<name>ACT_COSCS</name>
<evidence type="ECO:0000250" key="1">
    <source>
        <dbReference type="UniProtKB" id="P68137"/>
    </source>
</evidence>
<evidence type="ECO:0000305" key="2"/>
<sequence length="331" mass="37224">VGMDQKDAYVGDEAQSKRGVLTLKYPIEHGIVTNWDDMEKIWHHTFYNELRVAPEEHPVLLTEAPLNPKANKERMTQIMFETFNVPAMYVNIQAVLSLYASGRTTGCVLDSGDGVSHTVPIYEGYALPHAINRLDLAGRDLTDNLMKVLTERGYSFTTTAEREIVRDIKEKLTYVALDFDQEMKTAAESSQLEKSYELPDGNVIVIGNERFRCPEVRFQPSFIGMESSGIHDCTFKTIMKCDVDIRKDLYGNIVLSGGTTMFPGIGERMTKELTALAPSTMKIKVVAPPERKYSVWIGGSILASLSTFQQMWISKAEYDESGPSIVHRKCF</sequence>
<dbReference type="EC" id="3.6.4.-" evidence="1"/>
<dbReference type="EMBL" id="X59937">
    <property type="protein sequence ID" value="CAA42560.1"/>
    <property type="molecule type" value="Genomic_DNA"/>
</dbReference>
<dbReference type="PIR" id="S24409">
    <property type="entry name" value="S24409"/>
</dbReference>
<dbReference type="SMR" id="P30161"/>
<dbReference type="GO" id="GO:0005737">
    <property type="term" value="C:cytoplasm"/>
    <property type="evidence" value="ECO:0007669"/>
    <property type="project" value="UniProtKB-KW"/>
</dbReference>
<dbReference type="GO" id="GO:0005856">
    <property type="term" value="C:cytoskeleton"/>
    <property type="evidence" value="ECO:0007669"/>
    <property type="project" value="UniProtKB-SubCell"/>
</dbReference>
<dbReference type="GO" id="GO:0005524">
    <property type="term" value="F:ATP binding"/>
    <property type="evidence" value="ECO:0007669"/>
    <property type="project" value="UniProtKB-KW"/>
</dbReference>
<dbReference type="GO" id="GO:0016787">
    <property type="term" value="F:hydrolase activity"/>
    <property type="evidence" value="ECO:0007669"/>
    <property type="project" value="UniProtKB-KW"/>
</dbReference>
<dbReference type="CDD" id="cd10224">
    <property type="entry name" value="ASKHA_NBD_actin"/>
    <property type="match status" value="1"/>
</dbReference>
<dbReference type="FunFam" id="3.30.420.40:FF:000050">
    <property type="entry name" value="Actin, alpha skeletal muscle"/>
    <property type="match status" value="1"/>
</dbReference>
<dbReference type="FunFam" id="3.90.640.10:FF:000001">
    <property type="entry name" value="Actin, muscle"/>
    <property type="match status" value="1"/>
</dbReference>
<dbReference type="FunFam" id="3.30.420.40:FF:000404">
    <property type="entry name" value="Major actin"/>
    <property type="match status" value="1"/>
</dbReference>
<dbReference type="FunFam" id="3.30.420.40:FF:000058">
    <property type="entry name" value="Putative actin-related protein 5"/>
    <property type="match status" value="1"/>
</dbReference>
<dbReference type="Gene3D" id="3.30.420.40">
    <property type="match status" value="2"/>
</dbReference>
<dbReference type="Gene3D" id="3.90.640.10">
    <property type="entry name" value="Actin, Chain A, domain 4"/>
    <property type="match status" value="1"/>
</dbReference>
<dbReference type="InterPro" id="IPR004000">
    <property type="entry name" value="Actin"/>
</dbReference>
<dbReference type="InterPro" id="IPR020902">
    <property type="entry name" value="Actin/actin-like_CS"/>
</dbReference>
<dbReference type="InterPro" id="IPR004001">
    <property type="entry name" value="Actin_CS"/>
</dbReference>
<dbReference type="InterPro" id="IPR043129">
    <property type="entry name" value="ATPase_NBD"/>
</dbReference>
<dbReference type="PANTHER" id="PTHR11937">
    <property type="entry name" value="ACTIN"/>
    <property type="match status" value="1"/>
</dbReference>
<dbReference type="Pfam" id="PF00022">
    <property type="entry name" value="Actin"/>
    <property type="match status" value="1"/>
</dbReference>
<dbReference type="PRINTS" id="PR00190">
    <property type="entry name" value="ACTIN"/>
</dbReference>
<dbReference type="SMART" id="SM00268">
    <property type="entry name" value="ACTIN"/>
    <property type="match status" value="1"/>
</dbReference>
<dbReference type="SUPFAM" id="SSF53067">
    <property type="entry name" value="Actin-like ATPase domain"/>
    <property type="match status" value="2"/>
</dbReference>
<dbReference type="PROSITE" id="PS00406">
    <property type="entry name" value="ACTINS_1"/>
    <property type="match status" value="1"/>
</dbReference>
<dbReference type="PROSITE" id="PS00432">
    <property type="entry name" value="ACTINS_2"/>
    <property type="match status" value="1"/>
</dbReference>
<dbReference type="PROSITE" id="PS01132">
    <property type="entry name" value="ACTINS_ACT_LIKE"/>
    <property type="match status" value="1"/>
</dbReference>
<organism>
    <name type="scientific">Costaria costata</name>
    <name type="common">Five-ribbed kelp</name>
    <name type="synonym">Laminaria costata</name>
    <dbReference type="NCBI Taxonomy" id="2872"/>
    <lineage>
        <taxon>Eukaryota</taxon>
        <taxon>Sar</taxon>
        <taxon>Stramenopiles</taxon>
        <taxon>Ochrophyta</taxon>
        <taxon>PX clade</taxon>
        <taxon>Phaeophyceae</taxon>
        <taxon>Laminariales</taxon>
        <taxon>Costaria</taxon>
    </lineage>
</organism>
<keyword id="KW-0067">ATP-binding</keyword>
<keyword id="KW-0963">Cytoplasm</keyword>
<keyword id="KW-0206">Cytoskeleton</keyword>
<keyword id="KW-0378">Hydrolase</keyword>
<keyword id="KW-0547">Nucleotide-binding</keyword>
<accession>P30161</accession>